<feature type="chain" id="PRO_1000206161" description="ATP-dependent Clp protease proteolytic subunit">
    <location>
        <begin position="1"/>
        <end position="207"/>
    </location>
</feature>
<feature type="active site" description="Nucleophile" evidence="1">
    <location>
        <position position="111"/>
    </location>
</feature>
<feature type="active site" evidence="1">
    <location>
        <position position="136"/>
    </location>
</feature>
<evidence type="ECO:0000255" key="1">
    <source>
        <dbReference type="HAMAP-Rule" id="MF_00444"/>
    </source>
</evidence>
<keyword id="KW-0963">Cytoplasm</keyword>
<keyword id="KW-0378">Hydrolase</keyword>
<keyword id="KW-0645">Protease</keyword>
<keyword id="KW-1185">Reference proteome</keyword>
<keyword id="KW-0720">Serine protease</keyword>
<accession>A1SUW7</accession>
<reference key="1">
    <citation type="journal article" date="2008" name="BMC Genomics">
        <title>Genomics of an extreme psychrophile, Psychromonas ingrahamii.</title>
        <authorList>
            <person name="Riley M."/>
            <person name="Staley J.T."/>
            <person name="Danchin A."/>
            <person name="Wang T.Z."/>
            <person name="Brettin T.S."/>
            <person name="Hauser L.J."/>
            <person name="Land M.L."/>
            <person name="Thompson L.S."/>
        </authorList>
    </citation>
    <scope>NUCLEOTIDE SEQUENCE [LARGE SCALE GENOMIC DNA]</scope>
    <source>
        <strain>DSM 17664 / CCUG 51855 / 37</strain>
    </source>
</reference>
<name>CLPP_PSYIN</name>
<comment type="function">
    <text evidence="1">Cleaves peptides in various proteins in a process that requires ATP hydrolysis. Has a chymotrypsin-like activity. Plays a major role in the degradation of misfolded proteins.</text>
</comment>
<comment type="catalytic activity">
    <reaction evidence="1">
        <text>Hydrolysis of proteins to small peptides in the presence of ATP and magnesium. alpha-casein is the usual test substrate. In the absence of ATP, only oligopeptides shorter than five residues are hydrolyzed (such as succinyl-Leu-Tyr-|-NHMec, and Leu-Tyr-Leu-|-Tyr-Trp, in which cleavage of the -Tyr-|-Leu- and -Tyr-|-Trp bonds also occurs).</text>
        <dbReference type="EC" id="3.4.21.92"/>
    </reaction>
</comment>
<comment type="subunit">
    <text evidence="1">Fourteen ClpP subunits assemble into 2 heptameric rings which stack back to back to give a disk-like structure with a central cavity, resembling the structure of eukaryotic proteasomes.</text>
</comment>
<comment type="subcellular location">
    <subcellularLocation>
        <location evidence="1">Cytoplasm</location>
    </subcellularLocation>
</comment>
<comment type="similarity">
    <text evidence="1">Belongs to the peptidase S14 family.</text>
</comment>
<gene>
    <name evidence="1" type="primary">clpP</name>
    <name type="ordered locus">Ping_1465</name>
</gene>
<protein>
    <recommendedName>
        <fullName evidence="1">ATP-dependent Clp protease proteolytic subunit</fullName>
        <ecNumber evidence="1">3.4.21.92</ecNumber>
    </recommendedName>
    <alternativeName>
        <fullName evidence="1">Endopeptidase Clp</fullName>
    </alternativeName>
</protein>
<dbReference type="EC" id="3.4.21.92" evidence="1"/>
<dbReference type="EMBL" id="CP000510">
    <property type="protein sequence ID" value="ABM03282.1"/>
    <property type="molecule type" value="Genomic_DNA"/>
</dbReference>
<dbReference type="RefSeq" id="WP_011769842.1">
    <property type="nucleotide sequence ID" value="NC_008709.1"/>
</dbReference>
<dbReference type="SMR" id="A1SUW7"/>
<dbReference type="STRING" id="357804.Ping_1465"/>
<dbReference type="MEROPS" id="S14.001"/>
<dbReference type="KEGG" id="pin:Ping_1465"/>
<dbReference type="eggNOG" id="COG0740">
    <property type="taxonomic scope" value="Bacteria"/>
</dbReference>
<dbReference type="HOGENOM" id="CLU_058707_3_2_6"/>
<dbReference type="OrthoDB" id="9802800at2"/>
<dbReference type="Proteomes" id="UP000000639">
    <property type="component" value="Chromosome"/>
</dbReference>
<dbReference type="GO" id="GO:0005737">
    <property type="term" value="C:cytoplasm"/>
    <property type="evidence" value="ECO:0007669"/>
    <property type="project" value="UniProtKB-SubCell"/>
</dbReference>
<dbReference type="GO" id="GO:0009368">
    <property type="term" value="C:endopeptidase Clp complex"/>
    <property type="evidence" value="ECO:0007669"/>
    <property type="project" value="TreeGrafter"/>
</dbReference>
<dbReference type="GO" id="GO:0004176">
    <property type="term" value="F:ATP-dependent peptidase activity"/>
    <property type="evidence" value="ECO:0007669"/>
    <property type="project" value="InterPro"/>
</dbReference>
<dbReference type="GO" id="GO:0051117">
    <property type="term" value="F:ATPase binding"/>
    <property type="evidence" value="ECO:0007669"/>
    <property type="project" value="TreeGrafter"/>
</dbReference>
<dbReference type="GO" id="GO:0004252">
    <property type="term" value="F:serine-type endopeptidase activity"/>
    <property type="evidence" value="ECO:0007669"/>
    <property type="project" value="UniProtKB-UniRule"/>
</dbReference>
<dbReference type="GO" id="GO:0006515">
    <property type="term" value="P:protein quality control for misfolded or incompletely synthesized proteins"/>
    <property type="evidence" value="ECO:0007669"/>
    <property type="project" value="TreeGrafter"/>
</dbReference>
<dbReference type="CDD" id="cd07017">
    <property type="entry name" value="S14_ClpP_2"/>
    <property type="match status" value="1"/>
</dbReference>
<dbReference type="FunFam" id="3.90.226.10:FF:000001">
    <property type="entry name" value="ATP-dependent Clp protease proteolytic subunit"/>
    <property type="match status" value="1"/>
</dbReference>
<dbReference type="Gene3D" id="3.90.226.10">
    <property type="entry name" value="2-enoyl-CoA Hydratase, Chain A, domain 1"/>
    <property type="match status" value="1"/>
</dbReference>
<dbReference type="HAMAP" id="MF_00444">
    <property type="entry name" value="ClpP"/>
    <property type="match status" value="1"/>
</dbReference>
<dbReference type="InterPro" id="IPR001907">
    <property type="entry name" value="ClpP"/>
</dbReference>
<dbReference type="InterPro" id="IPR029045">
    <property type="entry name" value="ClpP/crotonase-like_dom_sf"/>
</dbReference>
<dbReference type="InterPro" id="IPR023562">
    <property type="entry name" value="ClpP/TepA"/>
</dbReference>
<dbReference type="InterPro" id="IPR033135">
    <property type="entry name" value="ClpP_His_AS"/>
</dbReference>
<dbReference type="InterPro" id="IPR018215">
    <property type="entry name" value="ClpP_Ser_AS"/>
</dbReference>
<dbReference type="NCBIfam" id="TIGR00493">
    <property type="entry name" value="clpP"/>
    <property type="match status" value="1"/>
</dbReference>
<dbReference type="NCBIfam" id="NF001368">
    <property type="entry name" value="PRK00277.1"/>
    <property type="match status" value="1"/>
</dbReference>
<dbReference type="NCBIfam" id="NF009205">
    <property type="entry name" value="PRK12553.1"/>
    <property type="match status" value="1"/>
</dbReference>
<dbReference type="PANTHER" id="PTHR10381">
    <property type="entry name" value="ATP-DEPENDENT CLP PROTEASE PROTEOLYTIC SUBUNIT"/>
    <property type="match status" value="1"/>
</dbReference>
<dbReference type="PANTHER" id="PTHR10381:SF70">
    <property type="entry name" value="ATP-DEPENDENT CLP PROTEASE PROTEOLYTIC SUBUNIT"/>
    <property type="match status" value="1"/>
</dbReference>
<dbReference type="Pfam" id="PF00574">
    <property type="entry name" value="CLP_protease"/>
    <property type="match status" value="1"/>
</dbReference>
<dbReference type="PRINTS" id="PR00127">
    <property type="entry name" value="CLPPROTEASEP"/>
</dbReference>
<dbReference type="SUPFAM" id="SSF52096">
    <property type="entry name" value="ClpP/crotonase"/>
    <property type="match status" value="1"/>
</dbReference>
<dbReference type="PROSITE" id="PS00382">
    <property type="entry name" value="CLP_PROTEASE_HIS"/>
    <property type="match status" value="1"/>
</dbReference>
<dbReference type="PROSITE" id="PS00381">
    <property type="entry name" value="CLP_PROTEASE_SER"/>
    <property type="match status" value="1"/>
</dbReference>
<sequence>MSNPFAGNTDPISNALIPMVVEQTAKGERSYDIYSRLLKERVIFLTGPVEDHVANVIAAQLLFLESESPEKDIFIYINSPGGSISAGMAIYDTMQFIKPDVSTVCMGMAASMGAFLLASGAPGKRHCLPNAKVMIHQPLGGFQGQASDFEIHAKEILATKHRMNELLAFHTGKDIEIIAQDTDRDNFMRASEAVEYGIVDSVLTHRK</sequence>
<organism>
    <name type="scientific">Psychromonas ingrahamii (strain DSM 17664 / CCUG 51855 / 37)</name>
    <dbReference type="NCBI Taxonomy" id="357804"/>
    <lineage>
        <taxon>Bacteria</taxon>
        <taxon>Pseudomonadati</taxon>
        <taxon>Pseudomonadota</taxon>
        <taxon>Gammaproteobacteria</taxon>
        <taxon>Alteromonadales</taxon>
        <taxon>Psychromonadaceae</taxon>
        <taxon>Psychromonas</taxon>
    </lineage>
</organism>
<proteinExistence type="inferred from homology"/>